<proteinExistence type="inferred from homology"/>
<accession>Q04LM3</accession>
<reference key="1">
    <citation type="journal article" date="2007" name="J. Bacteriol.">
        <title>Genome sequence of Avery's virulent serotype 2 strain D39 of Streptococcus pneumoniae and comparison with that of unencapsulated laboratory strain R6.</title>
        <authorList>
            <person name="Lanie J.A."/>
            <person name="Ng W.-L."/>
            <person name="Kazmierczak K.M."/>
            <person name="Andrzejewski T.M."/>
            <person name="Davidsen T.M."/>
            <person name="Wayne K.J."/>
            <person name="Tettelin H."/>
            <person name="Glass J.I."/>
            <person name="Winkler M.E."/>
        </authorList>
    </citation>
    <scope>NUCLEOTIDE SEQUENCE [LARGE SCALE GENOMIC DNA]</scope>
    <source>
        <strain>D39 / NCTC 7466</strain>
    </source>
</reference>
<keyword id="KW-1185">Reference proteome</keyword>
<organism>
    <name type="scientific">Streptococcus pneumoniae serotype 2 (strain D39 / NCTC 7466)</name>
    <dbReference type="NCBI Taxonomy" id="373153"/>
    <lineage>
        <taxon>Bacteria</taxon>
        <taxon>Bacillati</taxon>
        <taxon>Bacillota</taxon>
        <taxon>Bacilli</taxon>
        <taxon>Lactobacillales</taxon>
        <taxon>Streptococcaceae</taxon>
        <taxon>Streptococcus</taxon>
    </lineage>
</organism>
<gene>
    <name type="ordered locus">SPD_0576</name>
</gene>
<dbReference type="EMBL" id="CP000410">
    <property type="protein sequence ID" value="ABJ54923.1"/>
    <property type="molecule type" value="Genomic_DNA"/>
</dbReference>
<dbReference type="RefSeq" id="WP_001006373.1">
    <property type="nucleotide sequence ID" value="NZ_JAMLJR010000001.1"/>
</dbReference>
<dbReference type="SMR" id="Q04LM3"/>
<dbReference type="PaxDb" id="373153-SPD_0576"/>
<dbReference type="KEGG" id="spd:SPD_0576"/>
<dbReference type="eggNOG" id="COG4475">
    <property type="taxonomic scope" value="Bacteria"/>
</dbReference>
<dbReference type="HOGENOM" id="CLU_106658_0_0_9"/>
<dbReference type="Proteomes" id="UP000001452">
    <property type="component" value="Chromosome"/>
</dbReference>
<dbReference type="Gene3D" id="3.40.50.10360">
    <property type="entry name" value="Hypothetical protein TT1679"/>
    <property type="match status" value="1"/>
</dbReference>
<dbReference type="HAMAP" id="MF_00800">
    <property type="entry name" value="UPF0340"/>
    <property type="match status" value="1"/>
</dbReference>
<dbReference type="InterPro" id="IPR028345">
    <property type="entry name" value="Antibiotic_NAT-like"/>
</dbReference>
<dbReference type="InterPro" id="IPR006340">
    <property type="entry name" value="DUF436"/>
</dbReference>
<dbReference type="NCBIfam" id="TIGR01440">
    <property type="entry name" value="TIGR01440 family protein"/>
    <property type="match status" value="1"/>
</dbReference>
<dbReference type="Pfam" id="PF04260">
    <property type="entry name" value="DUF436"/>
    <property type="match status" value="1"/>
</dbReference>
<dbReference type="PIRSF" id="PIRSF007510">
    <property type="entry name" value="UCP007510"/>
    <property type="match status" value="1"/>
</dbReference>
<dbReference type="SUPFAM" id="SSF110710">
    <property type="entry name" value="TTHA0583/YokD-like"/>
    <property type="match status" value="1"/>
</dbReference>
<feature type="chain" id="PRO_1000046983" description="UPF0340 protein SPD_0576">
    <location>
        <begin position="1"/>
        <end position="187"/>
    </location>
</feature>
<name>Y576_STRP2</name>
<protein>
    <recommendedName>
        <fullName evidence="1">UPF0340 protein SPD_0576</fullName>
    </recommendedName>
</protein>
<evidence type="ECO:0000255" key="1">
    <source>
        <dbReference type="HAMAP-Rule" id="MF_00800"/>
    </source>
</evidence>
<comment type="similarity">
    <text evidence="1">Belongs to the UPF0340 family.</text>
</comment>
<sequence>MNETQIQRETRQVVEDVLEKTNLKQGALFVLGLSSSEVLGGQIGKESSQEIGELIVETILGILGSRGIHLAVQGCEHVNRALVVERQVAEQFGLEIVSVHPTLHAGGSGQLAAFKFMQDPVEVEFIKAHAGLDIGDTAIGMHVKHVQVPIRPILREIGHAHVTALTSRPKLIGGARAHYPQDAIRKF</sequence>